<proteinExistence type="predicted"/>
<comment type="subcellular location">
    <subcellularLocation>
        <location evidence="3">Cell membrane</location>
        <topology evidence="3">Multi-pass membrane protein</topology>
    </subcellularLocation>
</comment>
<evidence type="ECO:0000255" key="1"/>
<evidence type="ECO:0000256" key="2">
    <source>
        <dbReference type="SAM" id="MobiDB-lite"/>
    </source>
</evidence>
<evidence type="ECO:0000305" key="3"/>
<accession>P47274</accession>
<name>Y028_MYCGE</name>
<gene>
    <name type="ordered locus">MG028</name>
</gene>
<reference key="1">
    <citation type="journal article" date="1995" name="Science">
        <title>The minimal gene complement of Mycoplasma genitalium.</title>
        <authorList>
            <person name="Fraser C.M."/>
            <person name="Gocayne J.D."/>
            <person name="White O."/>
            <person name="Adams M.D."/>
            <person name="Clayton R.A."/>
            <person name="Fleischmann R.D."/>
            <person name="Bult C.J."/>
            <person name="Kerlavage A.R."/>
            <person name="Sutton G.G."/>
            <person name="Kelley J.M."/>
            <person name="Fritchman J.L."/>
            <person name="Weidman J.F."/>
            <person name="Small K.V."/>
            <person name="Sandusky M."/>
            <person name="Fuhrmann J.L."/>
            <person name="Nguyen D.T."/>
            <person name="Utterback T.R."/>
            <person name="Saudek D.M."/>
            <person name="Phillips C.A."/>
            <person name="Merrick J.M."/>
            <person name="Tomb J.-F."/>
            <person name="Dougherty B.A."/>
            <person name="Bott K.F."/>
            <person name="Hu P.-C."/>
            <person name="Lucier T.S."/>
            <person name="Peterson S.N."/>
            <person name="Smith H.O."/>
            <person name="Hutchison C.A. III"/>
            <person name="Venter J.C."/>
        </authorList>
    </citation>
    <scope>NUCLEOTIDE SEQUENCE [LARGE SCALE GENOMIC DNA]</scope>
    <source>
        <strain>ATCC 33530 / DSM 19775 / NCTC 10195 / G37</strain>
    </source>
</reference>
<feature type="chain" id="PRO_0000210391" description="Uncharacterized protein MG028">
    <location>
        <begin position="1"/>
        <end position="201"/>
    </location>
</feature>
<feature type="transmembrane region" description="Helical" evidence="1">
    <location>
        <begin position="9"/>
        <end position="29"/>
    </location>
</feature>
<feature type="transmembrane region" description="Helical" evidence="1">
    <location>
        <begin position="42"/>
        <end position="62"/>
    </location>
</feature>
<feature type="transmembrane region" description="Helical" evidence="1">
    <location>
        <begin position="86"/>
        <end position="106"/>
    </location>
</feature>
<feature type="transmembrane region" description="Helical" evidence="1">
    <location>
        <begin position="126"/>
        <end position="146"/>
    </location>
</feature>
<feature type="region of interest" description="Disordered" evidence="2">
    <location>
        <begin position="165"/>
        <end position="201"/>
    </location>
</feature>
<feature type="compositionally biased region" description="Basic and acidic residues" evidence="2">
    <location>
        <begin position="165"/>
        <end position="174"/>
    </location>
</feature>
<feature type="compositionally biased region" description="Basic and acidic residues" evidence="2">
    <location>
        <begin position="182"/>
        <end position="191"/>
    </location>
</feature>
<feature type="compositionally biased region" description="Polar residues" evidence="2">
    <location>
        <begin position="192"/>
        <end position="201"/>
    </location>
</feature>
<dbReference type="EMBL" id="L43967">
    <property type="protein sequence ID" value="AAC71244.1"/>
    <property type="molecule type" value="Genomic_DNA"/>
</dbReference>
<dbReference type="PIR" id="A64203">
    <property type="entry name" value="A64203"/>
</dbReference>
<dbReference type="RefSeq" id="WP_009885914.1">
    <property type="nucleotide sequence ID" value="NC_000908.2"/>
</dbReference>
<dbReference type="SMR" id="P47274"/>
<dbReference type="STRING" id="243273.MG_028"/>
<dbReference type="GeneID" id="88282143"/>
<dbReference type="KEGG" id="mge:MG_028"/>
<dbReference type="eggNOG" id="ENOG5030N2H">
    <property type="taxonomic scope" value="Bacteria"/>
</dbReference>
<dbReference type="HOGENOM" id="CLU_1359142_0_0_14"/>
<dbReference type="InParanoid" id="P47274"/>
<dbReference type="OrthoDB" id="401159at2"/>
<dbReference type="BioCyc" id="MGEN243273:G1GJ2-28-MONOMER"/>
<dbReference type="Proteomes" id="UP000000807">
    <property type="component" value="Chromosome"/>
</dbReference>
<dbReference type="GO" id="GO:0005886">
    <property type="term" value="C:plasma membrane"/>
    <property type="evidence" value="ECO:0007669"/>
    <property type="project" value="UniProtKB-SubCell"/>
</dbReference>
<dbReference type="InterPro" id="IPR035217">
    <property type="entry name" value="DUF5453"/>
</dbReference>
<dbReference type="Pfam" id="PF17534">
    <property type="entry name" value="DUF5453"/>
    <property type="match status" value="1"/>
</dbReference>
<organism>
    <name type="scientific">Mycoplasma genitalium (strain ATCC 33530 / DSM 19775 / NCTC 10195 / G37)</name>
    <name type="common">Mycoplasmoides genitalium</name>
    <dbReference type="NCBI Taxonomy" id="243273"/>
    <lineage>
        <taxon>Bacteria</taxon>
        <taxon>Bacillati</taxon>
        <taxon>Mycoplasmatota</taxon>
        <taxon>Mycoplasmoidales</taxon>
        <taxon>Mycoplasmoidaceae</taxon>
        <taxon>Mycoplasmoides</taxon>
    </lineage>
</organism>
<keyword id="KW-1003">Cell membrane</keyword>
<keyword id="KW-0472">Membrane</keyword>
<keyword id="KW-1185">Reference proteome</keyword>
<keyword id="KW-0812">Transmembrane</keyword>
<keyword id="KW-1133">Transmembrane helix</keyword>
<sequence length="201" mass="23238">MKRNWRQHYNVFLANLVLVFGFALNILVAKQSLNNTTPQFRFLFVTPFLGVVIGAVLYFFDVKWFLIDYPYKKFHFQKKWAIVYLSGVIVFFLNVLIGVVLLVVMVNYITNQILEREYERLFTNSLPYLWSTTGTSIVLSLISIGMSKTAHFFIDIEILKAKKGEPTDPNKTDNRAVVINLDENKKNEKEQSPPSAEMTSL</sequence>
<protein>
    <recommendedName>
        <fullName>Uncharacterized protein MG028</fullName>
    </recommendedName>
</protein>